<sequence length="285" mass="33288">MKGQVVRIIAGFYDVVDPKNRKLYPLLRGSGLLRLNETSPIVGDFVDFEEKGFIKKIYERKNQLIRPKVANIDQALVFISIREPNFSSLLLDKFLLVIEAKNIPVILLVTKIDLDSNFENLLLDYQKMNYNIFFINNKKNEIPVELKAELEKKLNFVIGQTGVGKTSFINNFLDKKFAIQEISQTLNRGKHTTRVVQIIEKENFRIIDSPGFSSFSYSEISKNEIRNAFKIFKKFSSDCKFRSCFHFQEKTDQCGIKRALKDGKIPENRYKNYLYFLGKYEKKNY</sequence>
<gene>
    <name evidence="1" type="primary">rsgA</name>
    <name type="ordered locus">MHJ_0148</name>
</gene>
<keyword id="KW-0963">Cytoplasm</keyword>
<keyword id="KW-0342">GTP-binding</keyword>
<keyword id="KW-0378">Hydrolase</keyword>
<keyword id="KW-0479">Metal-binding</keyword>
<keyword id="KW-0547">Nucleotide-binding</keyword>
<keyword id="KW-0690">Ribosome biogenesis</keyword>
<keyword id="KW-0694">RNA-binding</keyword>
<keyword id="KW-0699">rRNA-binding</keyword>
<keyword id="KW-0862">Zinc</keyword>
<reference key="1">
    <citation type="journal article" date="2005" name="J. Bacteriol.">
        <title>Swine and poultry pathogens: the complete genome sequences of two strains of Mycoplasma hyopneumoniae and a strain of Mycoplasma synoviae.</title>
        <authorList>
            <person name="Vasconcelos A.T.R."/>
            <person name="Ferreira H.B."/>
            <person name="Bizarro C.V."/>
            <person name="Bonatto S.L."/>
            <person name="Carvalho M.O."/>
            <person name="Pinto P.M."/>
            <person name="Almeida D.F."/>
            <person name="Almeida L.G.P."/>
            <person name="Almeida R."/>
            <person name="Alves-Junior L."/>
            <person name="Assuncao E.N."/>
            <person name="Azevedo V.A.C."/>
            <person name="Bogo M.R."/>
            <person name="Brigido M.M."/>
            <person name="Brocchi M."/>
            <person name="Burity H.A."/>
            <person name="Camargo A.A."/>
            <person name="Camargo S.S."/>
            <person name="Carepo M.S."/>
            <person name="Carraro D.M."/>
            <person name="de Mattos Cascardo J.C."/>
            <person name="Castro L.A."/>
            <person name="Cavalcanti G."/>
            <person name="Chemale G."/>
            <person name="Collevatti R.G."/>
            <person name="Cunha C.W."/>
            <person name="Dallagiovanna B."/>
            <person name="Dambros B.P."/>
            <person name="Dellagostin O.A."/>
            <person name="Falcao C."/>
            <person name="Fantinatti-Garboggini F."/>
            <person name="Felipe M.S.S."/>
            <person name="Fiorentin L."/>
            <person name="Franco G.R."/>
            <person name="Freitas N.S.A."/>
            <person name="Frias D."/>
            <person name="Grangeiro T.B."/>
            <person name="Grisard E.C."/>
            <person name="Guimaraes C.T."/>
            <person name="Hungria M."/>
            <person name="Jardim S.N."/>
            <person name="Krieger M.A."/>
            <person name="Laurino J.P."/>
            <person name="Lima L.F.A."/>
            <person name="Lopes M.I."/>
            <person name="Loreto E.L.S."/>
            <person name="Madeira H.M.F."/>
            <person name="Manfio G.P."/>
            <person name="Maranhao A.Q."/>
            <person name="Martinkovics C.T."/>
            <person name="Medeiros S.R.B."/>
            <person name="Moreira M.A.M."/>
            <person name="Neiva M."/>
            <person name="Ramalho-Neto C.E."/>
            <person name="Nicolas M.F."/>
            <person name="Oliveira S.C."/>
            <person name="Paixao R.F.C."/>
            <person name="Pedrosa F.O."/>
            <person name="Pena S.D.J."/>
            <person name="Pereira M."/>
            <person name="Pereira-Ferrari L."/>
            <person name="Piffer I."/>
            <person name="Pinto L.S."/>
            <person name="Potrich D.P."/>
            <person name="Salim A.C.M."/>
            <person name="Santos F.R."/>
            <person name="Schmitt R."/>
            <person name="Schneider M.P.C."/>
            <person name="Schrank A."/>
            <person name="Schrank I.S."/>
            <person name="Schuck A.F."/>
            <person name="Seuanez H.N."/>
            <person name="Silva D.W."/>
            <person name="Silva R."/>
            <person name="Silva S.C."/>
            <person name="Soares C.M.A."/>
            <person name="Souza K.R.L."/>
            <person name="Souza R.C."/>
            <person name="Staats C.C."/>
            <person name="Steffens M.B.R."/>
            <person name="Teixeira S.M.R."/>
            <person name="Urmenyi T.P."/>
            <person name="Vainstein M.H."/>
            <person name="Zuccherato L.W."/>
            <person name="Simpson A.J.G."/>
            <person name="Zaha A."/>
        </authorList>
    </citation>
    <scope>NUCLEOTIDE SEQUENCE [LARGE SCALE GENOMIC DNA]</scope>
    <source>
        <strain>J / ATCC 25934 / NCTC 10110</strain>
    </source>
</reference>
<dbReference type="EC" id="3.6.1.-" evidence="1"/>
<dbReference type="EMBL" id="AE017243">
    <property type="protein sequence ID" value="AAZ44239.1"/>
    <property type="molecule type" value="Genomic_DNA"/>
</dbReference>
<dbReference type="RefSeq" id="WP_011283948.1">
    <property type="nucleotide sequence ID" value="NC_007295.1"/>
</dbReference>
<dbReference type="SMR" id="Q4AAI2"/>
<dbReference type="GeneID" id="41334450"/>
<dbReference type="KEGG" id="mhj:MHJ_0148"/>
<dbReference type="eggNOG" id="COG1162">
    <property type="taxonomic scope" value="Bacteria"/>
</dbReference>
<dbReference type="HOGENOM" id="CLU_033617_2_1_14"/>
<dbReference type="OrthoDB" id="9809485at2"/>
<dbReference type="Proteomes" id="UP000000548">
    <property type="component" value="Chromosome"/>
</dbReference>
<dbReference type="GO" id="GO:0005737">
    <property type="term" value="C:cytoplasm"/>
    <property type="evidence" value="ECO:0007669"/>
    <property type="project" value="UniProtKB-SubCell"/>
</dbReference>
<dbReference type="GO" id="GO:0005525">
    <property type="term" value="F:GTP binding"/>
    <property type="evidence" value="ECO:0007669"/>
    <property type="project" value="UniProtKB-UniRule"/>
</dbReference>
<dbReference type="GO" id="GO:0003924">
    <property type="term" value="F:GTPase activity"/>
    <property type="evidence" value="ECO:0007669"/>
    <property type="project" value="UniProtKB-UniRule"/>
</dbReference>
<dbReference type="GO" id="GO:0046872">
    <property type="term" value="F:metal ion binding"/>
    <property type="evidence" value="ECO:0007669"/>
    <property type="project" value="UniProtKB-KW"/>
</dbReference>
<dbReference type="GO" id="GO:0019843">
    <property type="term" value="F:rRNA binding"/>
    <property type="evidence" value="ECO:0007669"/>
    <property type="project" value="UniProtKB-KW"/>
</dbReference>
<dbReference type="GO" id="GO:0042274">
    <property type="term" value="P:ribosomal small subunit biogenesis"/>
    <property type="evidence" value="ECO:0007669"/>
    <property type="project" value="UniProtKB-UniRule"/>
</dbReference>
<dbReference type="CDD" id="cd01854">
    <property type="entry name" value="YjeQ_EngC"/>
    <property type="match status" value="1"/>
</dbReference>
<dbReference type="Gene3D" id="2.40.50.140">
    <property type="entry name" value="Nucleic acid-binding proteins"/>
    <property type="match status" value="1"/>
</dbReference>
<dbReference type="Gene3D" id="3.40.50.300">
    <property type="entry name" value="P-loop containing nucleotide triphosphate hydrolases"/>
    <property type="match status" value="1"/>
</dbReference>
<dbReference type="Gene3D" id="1.10.40.50">
    <property type="entry name" value="Probable gtpase engc, domain 3"/>
    <property type="match status" value="1"/>
</dbReference>
<dbReference type="HAMAP" id="MF_01820">
    <property type="entry name" value="GTPase_RsgA"/>
    <property type="match status" value="1"/>
</dbReference>
<dbReference type="InterPro" id="IPR030378">
    <property type="entry name" value="G_CP_dom"/>
</dbReference>
<dbReference type="InterPro" id="IPR012340">
    <property type="entry name" value="NA-bd_OB-fold"/>
</dbReference>
<dbReference type="InterPro" id="IPR027417">
    <property type="entry name" value="P-loop_NTPase"/>
</dbReference>
<dbReference type="InterPro" id="IPR004881">
    <property type="entry name" value="Ribosome_biogen_GTPase_RsgA"/>
</dbReference>
<dbReference type="InterPro" id="IPR010914">
    <property type="entry name" value="RsgA_GTPase_dom"/>
</dbReference>
<dbReference type="InterPro" id="IPR031944">
    <property type="entry name" value="RsgA_N"/>
</dbReference>
<dbReference type="NCBIfam" id="TIGR00157">
    <property type="entry name" value="ribosome small subunit-dependent GTPase A"/>
    <property type="match status" value="1"/>
</dbReference>
<dbReference type="PANTHER" id="PTHR32120">
    <property type="entry name" value="SMALL RIBOSOMAL SUBUNIT BIOGENESIS GTPASE RSGA"/>
    <property type="match status" value="1"/>
</dbReference>
<dbReference type="PANTHER" id="PTHR32120:SF11">
    <property type="entry name" value="SMALL RIBOSOMAL SUBUNIT BIOGENESIS GTPASE RSGA 1, MITOCHONDRIAL-RELATED"/>
    <property type="match status" value="1"/>
</dbReference>
<dbReference type="Pfam" id="PF03193">
    <property type="entry name" value="RsgA_GTPase"/>
    <property type="match status" value="1"/>
</dbReference>
<dbReference type="Pfam" id="PF16745">
    <property type="entry name" value="RsgA_N"/>
    <property type="match status" value="1"/>
</dbReference>
<dbReference type="SUPFAM" id="SSF50249">
    <property type="entry name" value="Nucleic acid-binding proteins"/>
    <property type="match status" value="1"/>
</dbReference>
<dbReference type="SUPFAM" id="SSF52540">
    <property type="entry name" value="P-loop containing nucleoside triphosphate hydrolases"/>
    <property type="match status" value="1"/>
</dbReference>
<dbReference type="PROSITE" id="PS50936">
    <property type="entry name" value="ENGC_GTPASE"/>
    <property type="match status" value="1"/>
</dbReference>
<dbReference type="PROSITE" id="PS51721">
    <property type="entry name" value="G_CP"/>
    <property type="match status" value="1"/>
</dbReference>
<protein>
    <recommendedName>
        <fullName evidence="1">Small ribosomal subunit biogenesis GTPase RsgA</fullName>
        <ecNumber evidence="1">3.6.1.-</ecNumber>
    </recommendedName>
</protein>
<name>RSGA_MESHJ</name>
<organism>
    <name type="scientific">Mesomycoplasma hyopneumoniae (strain J / ATCC 25934 / NCTC 10110)</name>
    <name type="common">Mycoplasma hyopneumoniae</name>
    <dbReference type="NCBI Taxonomy" id="262719"/>
    <lineage>
        <taxon>Bacteria</taxon>
        <taxon>Bacillati</taxon>
        <taxon>Mycoplasmatota</taxon>
        <taxon>Mycoplasmoidales</taxon>
        <taxon>Metamycoplasmataceae</taxon>
        <taxon>Mesomycoplasma</taxon>
    </lineage>
</organism>
<evidence type="ECO:0000255" key="1">
    <source>
        <dbReference type="HAMAP-Rule" id="MF_01820"/>
    </source>
</evidence>
<evidence type="ECO:0000255" key="2">
    <source>
        <dbReference type="PROSITE-ProRule" id="PRU01058"/>
    </source>
</evidence>
<proteinExistence type="inferred from homology"/>
<accession>Q4AAI2</accession>
<feature type="chain" id="PRO_1000188105" description="Small ribosomal subunit biogenesis GTPase RsgA">
    <location>
        <begin position="1"/>
        <end position="285"/>
    </location>
</feature>
<feature type="domain" description="CP-type G" evidence="2">
    <location>
        <begin position="61"/>
        <end position="215"/>
    </location>
</feature>
<feature type="binding site" evidence="1">
    <location>
        <begin position="110"/>
        <end position="113"/>
    </location>
    <ligand>
        <name>GTP</name>
        <dbReference type="ChEBI" id="CHEBI:37565"/>
    </ligand>
</feature>
<feature type="binding site" evidence="1">
    <location>
        <begin position="159"/>
        <end position="167"/>
    </location>
    <ligand>
        <name>GTP</name>
        <dbReference type="ChEBI" id="CHEBI:37565"/>
    </ligand>
</feature>
<feature type="binding site" evidence="1">
    <location>
        <position position="239"/>
    </location>
    <ligand>
        <name>Zn(2+)</name>
        <dbReference type="ChEBI" id="CHEBI:29105"/>
    </ligand>
</feature>
<feature type="binding site" evidence="1">
    <location>
        <position position="244"/>
    </location>
    <ligand>
        <name>Zn(2+)</name>
        <dbReference type="ChEBI" id="CHEBI:29105"/>
    </ligand>
</feature>
<feature type="binding site" evidence="1">
    <location>
        <position position="246"/>
    </location>
    <ligand>
        <name>Zn(2+)</name>
        <dbReference type="ChEBI" id="CHEBI:29105"/>
    </ligand>
</feature>
<feature type="binding site" evidence="1">
    <location>
        <position position="254"/>
    </location>
    <ligand>
        <name>Zn(2+)</name>
        <dbReference type="ChEBI" id="CHEBI:29105"/>
    </ligand>
</feature>
<comment type="function">
    <text evidence="1">One of several proteins that assist in the late maturation steps of the functional core of the 30S ribosomal subunit. Helps release RbfA from mature subunits. May play a role in the assembly of ribosomal proteins into the subunit. Circularly permuted GTPase that catalyzes slow GTP hydrolysis, GTPase activity is stimulated by the 30S ribosomal subunit.</text>
</comment>
<comment type="cofactor">
    <cofactor evidence="1">
        <name>Zn(2+)</name>
        <dbReference type="ChEBI" id="CHEBI:29105"/>
    </cofactor>
    <text evidence="1">Binds 1 zinc ion per subunit.</text>
</comment>
<comment type="subunit">
    <text evidence="1">Monomer. Associates with 30S ribosomal subunit, binds 16S rRNA.</text>
</comment>
<comment type="subcellular location">
    <subcellularLocation>
        <location evidence="1">Cytoplasm</location>
    </subcellularLocation>
</comment>
<comment type="similarity">
    <text evidence="1">Belongs to the TRAFAC class YlqF/YawG GTPase family. RsgA subfamily.</text>
</comment>